<sequence length="208" mass="23025">MTNVLFIKANGLPAERSVSVALYEIFLTEYKKSHPDDNVTELDLFEADLPYYDVTMMSGLHKEAAGETLSPEEKRLADIANSYLDQFLAADKIVMAFPLWNFSIPAQFLTYLFYLNQAGKTFKYTANGPVGLVADKKIALLNARGGIYSDGPMQSFEMSLNYVKNVLAHFGISEPEMVIVEGHNAKPDQAKDIISAGAKEAVELAKIF</sequence>
<proteinExistence type="inferred from homology"/>
<evidence type="ECO:0000255" key="1">
    <source>
        <dbReference type="HAMAP-Rule" id="MF_01216"/>
    </source>
</evidence>
<gene>
    <name evidence="1" type="primary">azoR1</name>
    <name type="ordered locus">lmo0611</name>
</gene>
<name>AZOR1_LISMO</name>
<reference key="1">
    <citation type="journal article" date="2001" name="Science">
        <title>Comparative genomics of Listeria species.</title>
        <authorList>
            <person name="Glaser P."/>
            <person name="Frangeul L."/>
            <person name="Buchrieser C."/>
            <person name="Rusniok C."/>
            <person name="Amend A."/>
            <person name="Baquero F."/>
            <person name="Berche P."/>
            <person name="Bloecker H."/>
            <person name="Brandt P."/>
            <person name="Chakraborty T."/>
            <person name="Charbit A."/>
            <person name="Chetouani F."/>
            <person name="Couve E."/>
            <person name="de Daruvar A."/>
            <person name="Dehoux P."/>
            <person name="Domann E."/>
            <person name="Dominguez-Bernal G."/>
            <person name="Duchaud E."/>
            <person name="Durant L."/>
            <person name="Dussurget O."/>
            <person name="Entian K.-D."/>
            <person name="Fsihi H."/>
            <person name="Garcia-del Portillo F."/>
            <person name="Garrido P."/>
            <person name="Gautier L."/>
            <person name="Goebel W."/>
            <person name="Gomez-Lopez N."/>
            <person name="Hain T."/>
            <person name="Hauf J."/>
            <person name="Jackson D."/>
            <person name="Jones L.-M."/>
            <person name="Kaerst U."/>
            <person name="Kreft J."/>
            <person name="Kuhn M."/>
            <person name="Kunst F."/>
            <person name="Kurapkat G."/>
            <person name="Madueno E."/>
            <person name="Maitournam A."/>
            <person name="Mata Vicente J."/>
            <person name="Ng E."/>
            <person name="Nedjari H."/>
            <person name="Nordsiek G."/>
            <person name="Novella S."/>
            <person name="de Pablos B."/>
            <person name="Perez-Diaz J.-C."/>
            <person name="Purcell R."/>
            <person name="Remmel B."/>
            <person name="Rose M."/>
            <person name="Schlueter T."/>
            <person name="Simoes N."/>
            <person name="Tierrez A."/>
            <person name="Vazquez-Boland J.-A."/>
            <person name="Voss H."/>
            <person name="Wehland J."/>
            <person name="Cossart P."/>
        </authorList>
    </citation>
    <scope>NUCLEOTIDE SEQUENCE [LARGE SCALE GENOMIC DNA]</scope>
    <source>
        <strain>ATCC BAA-679 / EGD-e</strain>
    </source>
</reference>
<comment type="function">
    <text evidence="1">Quinone reductase that provides resistance to thiol-specific stress caused by electrophilic quinones.</text>
</comment>
<comment type="function">
    <text evidence="1">Also exhibits azoreductase activity. Catalyzes the reductive cleavage of the azo bond in aromatic azo compounds to the corresponding amines.</text>
</comment>
<comment type="catalytic activity">
    <reaction evidence="1">
        <text>2 a quinone + NADH + H(+) = 2 a 1,4-benzosemiquinone + NAD(+)</text>
        <dbReference type="Rhea" id="RHEA:65952"/>
        <dbReference type="ChEBI" id="CHEBI:15378"/>
        <dbReference type="ChEBI" id="CHEBI:57540"/>
        <dbReference type="ChEBI" id="CHEBI:57945"/>
        <dbReference type="ChEBI" id="CHEBI:132124"/>
        <dbReference type="ChEBI" id="CHEBI:134225"/>
    </reaction>
</comment>
<comment type="catalytic activity">
    <reaction evidence="1">
        <text>N,N-dimethyl-1,4-phenylenediamine + anthranilate + 2 NAD(+) = 2-(4-dimethylaminophenyl)diazenylbenzoate + 2 NADH + 2 H(+)</text>
        <dbReference type="Rhea" id="RHEA:55872"/>
        <dbReference type="ChEBI" id="CHEBI:15378"/>
        <dbReference type="ChEBI" id="CHEBI:15783"/>
        <dbReference type="ChEBI" id="CHEBI:16567"/>
        <dbReference type="ChEBI" id="CHEBI:57540"/>
        <dbReference type="ChEBI" id="CHEBI:57945"/>
        <dbReference type="ChEBI" id="CHEBI:71579"/>
        <dbReference type="EC" id="1.7.1.17"/>
    </reaction>
</comment>
<comment type="cofactor">
    <cofactor evidence="1">
        <name>FMN</name>
        <dbReference type="ChEBI" id="CHEBI:58210"/>
    </cofactor>
    <text evidence="1">Binds 1 FMN per subunit.</text>
</comment>
<comment type="subunit">
    <text evidence="1">Homodimer.</text>
</comment>
<comment type="similarity">
    <text evidence="1">Belongs to the azoreductase type 1 family.</text>
</comment>
<protein>
    <recommendedName>
        <fullName evidence="1">FMN-dependent NADH:quinone oxidoreductase 1</fullName>
        <ecNumber evidence="1">1.6.5.-</ecNumber>
    </recommendedName>
    <alternativeName>
        <fullName evidence="1">Azo-dye reductase 1</fullName>
    </alternativeName>
    <alternativeName>
        <fullName evidence="1">FMN-dependent NADH-azo compound oxidoreductase 1</fullName>
    </alternativeName>
    <alternativeName>
        <fullName evidence="1">FMN-dependent NADH-azoreductase 1</fullName>
        <ecNumber evidence="1">1.7.1.17</ecNumber>
    </alternativeName>
</protein>
<accession>Q8Y9C1</accession>
<dbReference type="EC" id="1.6.5.-" evidence="1"/>
<dbReference type="EC" id="1.7.1.17" evidence="1"/>
<dbReference type="EMBL" id="AL591976">
    <property type="protein sequence ID" value="CAC98689.1"/>
    <property type="molecule type" value="Genomic_DNA"/>
</dbReference>
<dbReference type="PIR" id="AC1151">
    <property type="entry name" value="AC1151"/>
</dbReference>
<dbReference type="RefSeq" id="WP_003722807.1">
    <property type="nucleotide sequence ID" value="NZ_CP149495.1"/>
</dbReference>
<dbReference type="SMR" id="Q8Y9C1"/>
<dbReference type="STRING" id="169963.gene:17593261"/>
<dbReference type="PaxDb" id="169963-lmo0611"/>
<dbReference type="EnsemblBacteria" id="CAC98689">
    <property type="protein sequence ID" value="CAC98689"/>
    <property type="gene ID" value="CAC98689"/>
</dbReference>
<dbReference type="KEGG" id="lmo:lmo0611"/>
<dbReference type="PATRIC" id="fig|169963.11.peg.630"/>
<dbReference type="eggNOG" id="COG1182">
    <property type="taxonomic scope" value="Bacteria"/>
</dbReference>
<dbReference type="HOGENOM" id="CLU_088964_3_0_9"/>
<dbReference type="OrthoDB" id="9805013at2"/>
<dbReference type="PhylomeDB" id="Q8Y9C1"/>
<dbReference type="BioCyc" id="LMON169963:LMO0611-MONOMER"/>
<dbReference type="Proteomes" id="UP000000817">
    <property type="component" value="Chromosome"/>
</dbReference>
<dbReference type="GO" id="GO:0009055">
    <property type="term" value="F:electron transfer activity"/>
    <property type="evidence" value="ECO:0007669"/>
    <property type="project" value="UniProtKB-UniRule"/>
</dbReference>
<dbReference type="GO" id="GO:0010181">
    <property type="term" value="F:FMN binding"/>
    <property type="evidence" value="ECO:0007669"/>
    <property type="project" value="UniProtKB-UniRule"/>
</dbReference>
<dbReference type="GO" id="GO:0016652">
    <property type="term" value="F:oxidoreductase activity, acting on NAD(P)H as acceptor"/>
    <property type="evidence" value="ECO:0007669"/>
    <property type="project" value="UniProtKB-UniRule"/>
</dbReference>
<dbReference type="GO" id="GO:0016655">
    <property type="term" value="F:oxidoreductase activity, acting on NAD(P)H, quinone or similar compound as acceptor"/>
    <property type="evidence" value="ECO:0007669"/>
    <property type="project" value="InterPro"/>
</dbReference>
<dbReference type="Gene3D" id="3.40.50.360">
    <property type="match status" value="1"/>
</dbReference>
<dbReference type="HAMAP" id="MF_01216">
    <property type="entry name" value="Azoreductase_type1"/>
    <property type="match status" value="1"/>
</dbReference>
<dbReference type="InterPro" id="IPR003680">
    <property type="entry name" value="Flavodoxin_fold"/>
</dbReference>
<dbReference type="InterPro" id="IPR029039">
    <property type="entry name" value="Flavoprotein-like_sf"/>
</dbReference>
<dbReference type="InterPro" id="IPR050104">
    <property type="entry name" value="FMN-dep_NADH:Q_OxRdtase_AzoR1"/>
</dbReference>
<dbReference type="InterPro" id="IPR023048">
    <property type="entry name" value="NADH:quinone_OxRdtase_FMN_depd"/>
</dbReference>
<dbReference type="NCBIfam" id="NF010075">
    <property type="entry name" value="PRK13556.1"/>
    <property type="match status" value="1"/>
</dbReference>
<dbReference type="PANTHER" id="PTHR43741">
    <property type="entry name" value="FMN-DEPENDENT NADH-AZOREDUCTASE 1"/>
    <property type="match status" value="1"/>
</dbReference>
<dbReference type="PANTHER" id="PTHR43741:SF4">
    <property type="entry name" value="FMN-DEPENDENT NADH:QUINONE OXIDOREDUCTASE"/>
    <property type="match status" value="1"/>
</dbReference>
<dbReference type="Pfam" id="PF02525">
    <property type="entry name" value="Flavodoxin_2"/>
    <property type="match status" value="1"/>
</dbReference>
<dbReference type="SUPFAM" id="SSF52218">
    <property type="entry name" value="Flavoproteins"/>
    <property type="match status" value="1"/>
</dbReference>
<organism>
    <name type="scientific">Listeria monocytogenes serovar 1/2a (strain ATCC BAA-679 / EGD-e)</name>
    <dbReference type="NCBI Taxonomy" id="169963"/>
    <lineage>
        <taxon>Bacteria</taxon>
        <taxon>Bacillati</taxon>
        <taxon>Bacillota</taxon>
        <taxon>Bacilli</taxon>
        <taxon>Bacillales</taxon>
        <taxon>Listeriaceae</taxon>
        <taxon>Listeria</taxon>
    </lineage>
</organism>
<keyword id="KW-0285">Flavoprotein</keyword>
<keyword id="KW-0288">FMN</keyword>
<keyword id="KW-0520">NAD</keyword>
<keyword id="KW-0560">Oxidoreductase</keyword>
<keyword id="KW-1185">Reference proteome</keyword>
<feature type="chain" id="PRO_0000166342" description="FMN-dependent NADH:quinone oxidoreductase 1">
    <location>
        <begin position="1"/>
        <end position="208"/>
    </location>
</feature>
<feature type="binding site" evidence="1">
    <location>
        <begin position="17"/>
        <end position="19"/>
    </location>
    <ligand>
        <name>FMN</name>
        <dbReference type="ChEBI" id="CHEBI:58210"/>
    </ligand>
</feature>